<reference key="1">
    <citation type="journal article" date="2002" name="Proc. Natl. Acad. Sci. U.S.A.">
        <title>The chloroplast and mitochondrial genome sequences of the charophyte Chaetosphaeridium globosum: insights into the timing of the events that restructured organelle DNAs within the green algal lineage that led to land plants.</title>
        <authorList>
            <person name="Turmel M."/>
            <person name="Otis C."/>
            <person name="Lemieux C."/>
        </authorList>
    </citation>
    <scope>NUCLEOTIDE SEQUENCE [LARGE SCALE GENOMIC DNA]</scope>
    <source>
        <strain>M1311</strain>
    </source>
</reference>
<protein>
    <recommendedName>
        <fullName evidence="1">Protein PsbN</fullName>
    </recommendedName>
</protein>
<comment type="function">
    <text evidence="1">May play a role in photosystem I and II biogenesis.</text>
</comment>
<comment type="subcellular location">
    <subcellularLocation>
        <location evidence="1">Plastid</location>
        <location evidence="1">Chloroplast thylakoid membrane</location>
        <topology evidence="1">Single-pass membrane protein</topology>
    </subcellularLocation>
</comment>
<comment type="similarity">
    <text evidence="1">Belongs to the PsbN family.</text>
</comment>
<comment type="caution">
    <text evidence="1">Originally thought to be a component of PSII; based on experiments in Synechocystis, N.tabacum and barley, and its absence from PSII in T.elongatus and T.vulcanus, this is probably not true.</text>
</comment>
<proteinExistence type="inferred from homology"/>
<geneLocation type="chloroplast"/>
<organism>
    <name type="scientific">Chaetosphaeridium globosum</name>
    <name type="common">Charophycean green alga</name>
    <name type="synonym">Herposteiron globosum</name>
    <dbReference type="NCBI Taxonomy" id="96477"/>
    <lineage>
        <taxon>Eukaryota</taxon>
        <taxon>Viridiplantae</taxon>
        <taxon>Streptophyta</taxon>
        <taxon>Coleochaetophyceae</taxon>
        <taxon>Coleochaetales</taxon>
        <taxon>Chaetosphaeridiaceae</taxon>
        <taxon>Chaetosphaeridium</taxon>
    </lineage>
</organism>
<accession>Q8M9Z2</accession>
<name>PSBN_CHAGL</name>
<feature type="chain" id="PRO_0000207883" description="Protein PsbN">
    <location>
        <begin position="1"/>
        <end position="43"/>
    </location>
</feature>
<feature type="transmembrane region" description="Helical" evidence="1">
    <location>
        <begin position="4"/>
        <end position="24"/>
    </location>
</feature>
<keyword id="KW-0150">Chloroplast</keyword>
<keyword id="KW-0472">Membrane</keyword>
<keyword id="KW-0934">Plastid</keyword>
<keyword id="KW-0793">Thylakoid</keyword>
<keyword id="KW-0812">Transmembrane</keyword>
<keyword id="KW-1133">Transmembrane helix</keyword>
<evidence type="ECO:0000255" key="1">
    <source>
        <dbReference type="HAMAP-Rule" id="MF_00293"/>
    </source>
</evidence>
<dbReference type="EMBL" id="AF494278">
    <property type="protein sequence ID" value="AAM96550.1"/>
    <property type="molecule type" value="Genomic_DNA"/>
</dbReference>
<dbReference type="RefSeq" id="NP_683794.1">
    <property type="nucleotide sequence ID" value="NC_004115.1"/>
</dbReference>
<dbReference type="SMR" id="Q8M9Z2"/>
<dbReference type="GeneID" id="860706"/>
<dbReference type="GO" id="GO:0009535">
    <property type="term" value="C:chloroplast thylakoid membrane"/>
    <property type="evidence" value="ECO:0007669"/>
    <property type="project" value="UniProtKB-SubCell"/>
</dbReference>
<dbReference type="GO" id="GO:0015979">
    <property type="term" value="P:photosynthesis"/>
    <property type="evidence" value="ECO:0007669"/>
    <property type="project" value="InterPro"/>
</dbReference>
<dbReference type="HAMAP" id="MF_00293">
    <property type="entry name" value="PSII_PsbN"/>
    <property type="match status" value="1"/>
</dbReference>
<dbReference type="InterPro" id="IPR003398">
    <property type="entry name" value="PSII_PsbN"/>
</dbReference>
<dbReference type="PANTHER" id="PTHR35326">
    <property type="entry name" value="PROTEIN PSBN"/>
    <property type="match status" value="1"/>
</dbReference>
<dbReference type="PANTHER" id="PTHR35326:SF3">
    <property type="entry name" value="PROTEIN PSBN"/>
    <property type="match status" value="1"/>
</dbReference>
<dbReference type="Pfam" id="PF02468">
    <property type="entry name" value="PsbN"/>
    <property type="match status" value="1"/>
</dbReference>
<gene>
    <name evidence="1" type="primary">psbN</name>
</gene>
<sequence>METGILVVIFISCLLVSFTGYTIYTAFGQPSKQLRDPFEEHED</sequence>